<proteinExistence type="inferred from homology"/>
<sequence length="160" mass="17873">MPSFDVVSEVDMQELRNAVDQTQREIDTRYDFKGTAAAIELNEMELTLFGDAEFQVEQVMDILVQKIAKRGIDVGCLEPGKLEEGGGKARRVVKVLAGIETDTARKIVKLIKEAKLKVQAAIQGDKVRVTGKKRDDLQEVIALLRQADVGLPLQYNNFRD</sequence>
<reference key="1">
    <citation type="journal article" date="2011" name="Stand. Genomic Sci.">
        <title>Complete genome sequence of 'Thioalkalivibrio sulfidophilus' HL-EbGr7.</title>
        <authorList>
            <person name="Muyzer G."/>
            <person name="Sorokin D.Y."/>
            <person name="Mavromatis K."/>
            <person name="Lapidus A."/>
            <person name="Clum A."/>
            <person name="Ivanova N."/>
            <person name="Pati A."/>
            <person name="d'Haeseleer P."/>
            <person name="Woyke T."/>
            <person name="Kyrpides N.C."/>
        </authorList>
    </citation>
    <scope>NUCLEOTIDE SEQUENCE [LARGE SCALE GENOMIC DNA]</scope>
    <source>
        <strain>HL-EbGR7</strain>
    </source>
</reference>
<comment type="function">
    <text evidence="1">Nucleotide-binding protein.</text>
</comment>
<comment type="similarity">
    <text evidence="1">Belongs to the YajQ family.</text>
</comment>
<feature type="chain" id="PRO_1000147330" description="Nucleotide-binding protein Tgr7_1196">
    <location>
        <begin position="1"/>
        <end position="160"/>
    </location>
</feature>
<keyword id="KW-0547">Nucleotide-binding</keyword>
<keyword id="KW-1185">Reference proteome</keyword>
<name>Y1196_THISH</name>
<gene>
    <name type="ordered locus">Tgr7_1196</name>
</gene>
<protein>
    <recommendedName>
        <fullName evidence="1">Nucleotide-binding protein Tgr7_1196</fullName>
    </recommendedName>
</protein>
<dbReference type="EMBL" id="CP001339">
    <property type="protein sequence ID" value="ACL72282.1"/>
    <property type="molecule type" value="Genomic_DNA"/>
</dbReference>
<dbReference type="RefSeq" id="WP_012637765.1">
    <property type="nucleotide sequence ID" value="NC_011901.1"/>
</dbReference>
<dbReference type="SMR" id="B8GQ87"/>
<dbReference type="STRING" id="396588.Tgr7_1196"/>
<dbReference type="KEGG" id="tgr:Tgr7_1196"/>
<dbReference type="eggNOG" id="COG1666">
    <property type="taxonomic scope" value="Bacteria"/>
</dbReference>
<dbReference type="HOGENOM" id="CLU_099839_1_0_6"/>
<dbReference type="OrthoDB" id="9801447at2"/>
<dbReference type="Proteomes" id="UP000002383">
    <property type="component" value="Chromosome"/>
</dbReference>
<dbReference type="GO" id="GO:0005829">
    <property type="term" value="C:cytosol"/>
    <property type="evidence" value="ECO:0007669"/>
    <property type="project" value="TreeGrafter"/>
</dbReference>
<dbReference type="GO" id="GO:0000166">
    <property type="term" value="F:nucleotide binding"/>
    <property type="evidence" value="ECO:0007669"/>
    <property type="project" value="TreeGrafter"/>
</dbReference>
<dbReference type="CDD" id="cd11740">
    <property type="entry name" value="YajQ_like"/>
    <property type="match status" value="1"/>
</dbReference>
<dbReference type="FunFam" id="3.30.70.860:FF:000001">
    <property type="entry name" value="UPF0234 protein YajQ"/>
    <property type="match status" value="1"/>
</dbReference>
<dbReference type="Gene3D" id="3.30.70.860">
    <property type="match status" value="1"/>
</dbReference>
<dbReference type="Gene3D" id="3.30.70.990">
    <property type="entry name" value="YajQ-like, domain 2"/>
    <property type="match status" value="1"/>
</dbReference>
<dbReference type="HAMAP" id="MF_00632">
    <property type="entry name" value="YajQ"/>
    <property type="match status" value="1"/>
</dbReference>
<dbReference type="InterPro" id="IPR007551">
    <property type="entry name" value="DUF520"/>
</dbReference>
<dbReference type="InterPro" id="IPR035571">
    <property type="entry name" value="UPF0234-like_C"/>
</dbReference>
<dbReference type="InterPro" id="IPR035570">
    <property type="entry name" value="UPF0234_N"/>
</dbReference>
<dbReference type="InterPro" id="IPR036183">
    <property type="entry name" value="YajQ-like_sf"/>
</dbReference>
<dbReference type="NCBIfam" id="NF003819">
    <property type="entry name" value="PRK05412.1"/>
    <property type="match status" value="1"/>
</dbReference>
<dbReference type="PANTHER" id="PTHR30476">
    <property type="entry name" value="UPF0234 PROTEIN YAJQ"/>
    <property type="match status" value="1"/>
</dbReference>
<dbReference type="PANTHER" id="PTHR30476:SF0">
    <property type="entry name" value="UPF0234 PROTEIN YAJQ"/>
    <property type="match status" value="1"/>
</dbReference>
<dbReference type="Pfam" id="PF04461">
    <property type="entry name" value="DUF520"/>
    <property type="match status" value="1"/>
</dbReference>
<dbReference type="SUPFAM" id="SSF89963">
    <property type="entry name" value="YajQ-like"/>
    <property type="match status" value="2"/>
</dbReference>
<evidence type="ECO:0000255" key="1">
    <source>
        <dbReference type="HAMAP-Rule" id="MF_00632"/>
    </source>
</evidence>
<organism>
    <name type="scientific">Thioalkalivibrio sulfidiphilus (strain HL-EbGR7)</name>
    <dbReference type="NCBI Taxonomy" id="396588"/>
    <lineage>
        <taxon>Bacteria</taxon>
        <taxon>Pseudomonadati</taxon>
        <taxon>Pseudomonadota</taxon>
        <taxon>Gammaproteobacteria</taxon>
        <taxon>Chromatiales</taxon>
        <taxon>Ectothiorhodospiraceae</taxon>
        <taxon>Thioalkalivibrio</taxon>
    </lineage>
</organism>
<accession>B8GQ87</accession>